<reference key="1">
    <citation type="submission" date="2008-04" db="EMBL/GenBank/DDBJ databases">
        <title>Complete sequence of Yersinia pseudotuberculosis PB1/+.</title>
        <authorList>
            <person name="Copeland A."/>
            <person name="Lucas S."/>
            <person name="Lapidus A."/>
            <person name="Glavina del Rio T."/>
            <person name="Dalin E."/>
            <person name="Tice H."/>
            <person name="Bruce D."/>
            <person name="Goodwin L."/>
            <person name="Pitluck S."/>
            <person name="Munk A.C."/>
            <person name="Brettin T."/>
            <person name="Detter J.C."/>
            <person name="Han C."/>
            <person name="Tapia R."/>
            <person name="Schmutz J."/>
            <person name="Larimer F."/>
            <person name="Land M."/>
            <person name="Hauser L."/>
            <person name="Challacombe J.F."/>
            <person name="Green L."/>
            <person name="Lindler L.E."/>
            <person name="Nikolich M.P."/>
            <person name="Richardson P."/>
        </authorList>
    </citation>
    <scope>NUCLEOTIDE SEQUENCE [LARGE SCALE GENOMIC DNA]</scope>
    <source>
        <strain>PB1/+</strain>
    </source>
</reference>
<proteinExistence type="inferred from homology"/>
<keyword id="KW-0012">Acyltransferase</keyword>
<keyword id="KW-0067">ATP-binding</keyword>
<keyword id="KW-0997">Cell inner membrane</keyword>
<keyword id="KW-1003">Cell membrane</keyword>
<keyword id="KW-0436">Ligase</keyword>
<keyword id="KW-0472">Membrane</keyword>
<keyword id="KW-0511">Multifunctional enzyme</keyword>
<keyword id="KW-0547">Nucleotide-binding</keyword>
<keyword id="KW-0808">Transferase</keyword>
<keyword id="KW-0812">Transmembrane</keyword>
<keyword id="KW-1133">Transmembrane helix</keyword>
<feature type="chain" id="PRO_1000137904" description="Bifunctional protein Aas">
    <location>
        <begin position="1"/>
        <end position="718"/>
    </location>
</feature>
<feature type="transmembrane region" description="Helical" evidence="1">
    <location>
        <begin position="258"/>
        <end position="277"/>
    </location>
</feature>
<feature type="transmembrane region" description="Helical" evidence="1">
    <location>
        <begin position="409"/>
        <end position="433"/>
    </location>
</feature>
<feature type="region of interest" description="Acyltransferase">
    <location>
        <begin position="15"/>
        <end position="138"/>
    </location>
</feature>
<feature type="region of interest" description="AMP-binding">
    <location>
        <begin position="233"/>
        <end position="646"/>
    </location>
</feature>
<feature type="active site" evidence="1">
    <location>
        <position position="36"/>
    </location>
</feature>
<organism>
    <name type="scientific">Yersinia pseudotuberculosis serotype IB (strain PB1/+)</name>
    <dbReference type="NCBI Taxonomy" id="502801"/>
    <lineage>
        <taxon>Bacteria</taxon>
        <taxon>Pseudomonadati</taxon>
        <taxon>Pseudomonadota</taxon>
        <taxon>Gammaproteobacteria</taxon>
        <taxon>Enterobacterales</taxon>
        <taxon>Yersiniaceae</taxon>
        <taxon>Yersinia</taxon>
    </lineage>
</organism>
<comment type="function">
    <text evidence="1">Plays a role in lysophospholipid acylation. Transfers fatty acids to the 1-position via an enzyme-bound acyl-ACP intermediate in the presence of ATP and magnesium. Its physiological function is to regenerate phosphatidylethanolamine from 2-acyl-glycero-3-phosphoethanolamine (2-acyl-GPE) formed by transacylation reactions or degradation by phospholipase A1.</text>
</comment>
<comment type="catalytic activity">
    <reaction evidence="1">
        <text>a 2-acyl-sn-glycero-3-phosphoethanolamine + a fatty acyl-[ACP] = a 1,2-diacyl-sn-glycero-3-phosphoethanolamine + holo-[ACP]</text>
        <dbReference type="Rhea" id="RHEA:10304"/>
        <dbReference type="Rhea" id="RHEA-COMP:9685"/>
        <dbReference type="Rhea" id="RHEA-COMP:14125"/>
        <dbReference type="ChEBI" id="CHEBI:64479"/>
        <dbReference type="ChEBI" id="CHEBI:64612"/>
        <dbReference type="ChEBI" id="CHEBI:65213"/>
        <dbReference type="ChEBI" id="CHEBI:138651"/>
        <dbReference type="EC" id="2.3.1.40"/>
    </reaction>
</comment>
<comment type="catalytic activity">
    <reaction evidence="1">
        <text>a long-chain fatty acid + holo-[ACP] + ATP = a long-chain fatty acyl-[ACP] + AMP + diphosphate</text>
        <dbReference type="Rhea" id="RHEA:45588"/>
        <dbReference type="Rhea" id="RHEA-COMP:9685"/>
        <dbReference type="Rhea" id="RHEA-COMP:12682"/>
        <dbReference type="ChEBI" id="CHEBI:30616"/>
        <dbReference type="ChEBI" id="CHEBI:33019"/>
        <dbReference type="ChEBI" id="CHEBI:57560"/>
        <dbReference type="ChEBI" id="CHEBI:64479"/>
        <dbReference type="ChEBI" id="CHEBI:133243"/>
        <dbReference type="ChEBI" id="CHEBI:456215"/>
        <dbReference type="EC" id="6.2.1.20"/>
    </reaction>
</comment>
<comment type="subcellular location">
    <subcellularLocation>
        <location evidence="1">Cell inner membrane</location>
        <topology evidence="1">Multi-pass membrane protein</topology>
    </subcellularLocation>
</comment>
<comment type="similarity">
    <text evidence="1">In the N-terminal section; belongs to the 2-acyl-GPE acetyltransferase family.</text>
</comment>
<comment type="similarity">
    <text evidence="1">In the C-terminal section; belongs to the ATP-dependent AMP-binding enzyme family.</text>
</comment>
<name>AAS_YERPB</name>
<sequence>MAYRLLRALFRGLFRVTIDGVTDQFKHEKLIITPNHVSFLDGALLALFLPIKPVFAVYTSITDTWYMRWLKPYVDFVALDPTNPMAIKHLVRMVEQGRPVVIFPEGRITVTGSLMKIYDGAAFVAAKSGAAVVPIRLDGPEFTHFGRLQGVLKTRWFPKISIHVLPATTIPMPQAPRSRERRVLAGEHLHTIMMAARMATVPRETLFEALLSAQTRYGRFKPCIEDVSFKEDSYQTLLKKTLGVSRILQRFTVPGEHVGMLLPNATITAAAIFGASLRGRIPALLNYTSGAKGLQSAIIAASLKTIVTSRQFLEKGKLTHLPEQVNEVNWVYLEDLKDTVTLTDKLWILFHLCFPRRAMLPQQADDSALILFTSGSEGNPKGVVHSHASLLANVEQIRTIADFTPRDRFMSSLPLFHAFGLTVGLFTPLMTGSRVFLYPSPLHYRVVPELVYDRNCTVLFGTSTFLGNYARFAHPYDFARVRYVVAGAEKLAESTKQIWQDKFGIRILEGYGVTECAPVVAINVPMAAKVNTVGRILPGMEARLINVPGIAQGGRLQLRGPNIMRGYLRVENPGVLEQPSAENAQGELDANWYDTGDIVTLDEQGFCAIRGRVKRFAKLAGEMVSLESVEQLAISLSPEGQHAAAAKTDSAKGEALVLFTTDSEITRERLIKAARENGVPELAVPRDIRVVKALPLLGSGKPDFVTLGKMAQDPEMSV</sequence>
<accession>B2JZ75</accession>
<evidence type="ECO:0000255" key="1">
    <source>
        <dbReference type="HAMAP-Rule" id="MF_01162"/>
    </source>
</evidence>
<protein>
    <recommendedName>
        <fullName evidence="1">Bifunctional protein Aas</fullName>
    </recommendedName>
    <domain>
        <recommendedName>
            <fullName evidence="1">2-acylglycerophosphoethanolamine acyltransferase</fullName>
            <ecNumber evidence="1">2.3.1.40</ecNumber>
        </recommendedName>
        <alternativeName>
            <fullName evidence="1">2-acyl-GPE acyltransferase</fullName>
        </alternativeName>
        <alternativeName>
            <fullName evidence="1">Acyl-[acyl-carrier-protein]--phospholipid O-acyltransferase</fullName>
        </alternativeName>
    </domain>
    <domain>
        <recommendedName>
            <fullName evidence="1">Acyl-[acyl-carrier-protein] synthetase</fullName>
            <ecNumber evidence="1">6.2.1.20</ecNumber>
        </recommendedName>
        <alternativeName>
            <fullName evidence="1">Acyl-ACP synthetase</fullName>
        </alternativeName>
        <alternativeName>
            <fullName evidence="1">Long-chain-fatty-acid--[acyl-carrier-protein] ligase</fullName>
        </alternativeName>
    </domain>
</protein>
<gene>
    <name evidence="1" type="primary">aas</name>
    <name type="ordered locus">YPTS_3164</name>
</gene>
<dbReference type="EC" id="2.3.1.40" evidence="1"/>
<dbReference type="EC" id="6.2.1.20" evidence="1"/>
<dbReference type="EMBL" id="CP001048">
    <property type="protein sequence ID" value="ACC90119.1"/>
    <property type="molecule type" value="Genomic_DNA"/>
</dbReference>
<dbReference type="RefSeq" id="WP_011192876.1">
    <property type="nucleotide sequence ID" value="NZ_CP009780.1"/>
</dbReference>
<dbReference type="SMR" id="B2JZ75"/>
<dbReference type="GeneID" id="49784936"/>
<dbReference type="KEGG" id="ypb:YPTS_3164"/>
<dbReference type="PATRIC" id="fig|502801.10.peg.2597"/>
<dbReference type="GO" id="GO:0005886">
    <property type="term" value="C:plasma membrane"/>
    <property type="evidence" value="ECO:0007669"/>
    <property type="project" value="UniProtKB-SubCell"/>
</dbReference>
<dbReference type="GO" id="GO:0008779">
    <property type="term" value="F:acyl-[acyl-carrier-protein]-phospholipid O-acyltransferase activity"/>
    <property type="evidence" value="ECO:0007669"/>
    <property type="project" value="UniProtKB-UniRule"/>
</dbReference>
<dbReference type="GO" id="GO:0005524">
    <property type="term" value="F:ATP binding"/>
    <property type="evidence" value="ECO:0007669"/>
    <property type="project" value="UniProtKB-KW"/>
</dbReference>
<dbReference type="GO" id="GO:0008922">
    <property type="term" value="F:long-chain fatty acid [acyl-carrier-protein] ligase activity"/>
    <property type="evidence" value="ECO:0007669"/>
    <property type="project" value="UniProtKB-UniRule"/>
</dbReference>
<dbReference type="GO" id="GO:0031956">
    <property type="term" value="F:medium-chain fatty acid-CoA ligase activity"/>
    <property type="evidence" value="ECO:0007669"/>
    <property type="project" value="TreeGrafter"/>
</dbReference>
<dbReference type="GO" id="GO:0006631">
    <property type="term" value="P:fatty acid metabolic process"/>
    <property type="evidence" value="ECO:0007669"/>
    <property type="project" value="InterPro"/>
</dbReference>
<dbReference type="GO" id="GO:0008654">
    <property type="term" value="P:phospholipid biosynthetic process"/>
    <property type="evidence" value="ECO:0007669"/>
    <property type="project" value="InterPro"/>
</dbReference>
<dbReference type="CDD" id="cd07989">
    <property type="entry name" value="LPLAT_AGPAT-like"/>
    <property type="match status" value="1"/>
</dbReference>
<dbReference type="Gene3D" id="3.30.300.30">
    <property type="match status" value="1"/>
</dbReference>
<dbReference type="Gene3D" id="3.40.50.12780">
    <property type="entry name" value="N-terminal domain of ligase-like"/>
    <property type="match status" value="1"/>
</dbReference>
<dbReference type="HAMAP" id="MF_01162">
    <property type="entry name" value="Aas"/>
    <property type="match status" value="1"/>
</dbReference>
<dbReference type="InterPro" id="IPR023775">
    <property type="entry name" value="Aas"/>
</dbReference>
<dbReference type="InterPro" id="IPR025110">
    <property type="entry name" value="AMP-bd_C"/>
</dbReference>
<dbReference type="InterPro" id="IPR045851">
    <property type="entry name" value="AMP-bd_C_sf"/>
</dbReference>
<dbReference type="InterPro" id="IPR020845">
    <property type="entry name" value="AMP-binding_CS"/>
</dbReference>
<dbReference type="InterPro" id="IPR000873">
    <property type="entry name" value="AMP-dep_synth/lig_dom"/>
</dbReference>
<dbReference type="InterPro" id="IPR042099">
    <property type="entry name" value="ANL_N_sf"/>
</dbReference>
<dbReference type="InterPro" id="IPR002123">
    <property type="entry name" value="Plipid/glycerol_acylTrfase"/>
</dbReference>
<dbReference type="NCBIfam" id="NF005959">
    <property type="entry name" value="PRK08043.1"/>
    <property type="match status" value="1"/>
</dbReference>
<dbReference type="PANTHER" id="PTHR43201">
    <property type="entry name" value="ACYL-COA SYNTHETASE"/>
    <property type="match status" value="1"/>
</dbReference>
<dbReference type="PANTHER" id="PTHR43201:SF5">
    <property type="entry name" value="MEDIUM-CHAIN ACYL-COA LIGASE ACSF2, MITOCHONDRIAL"/>
    <property type="match status" value="1"/>
</dbReference>
<dbReference type="Pfam" id="PF01553">
    <property type="entry name" value="Acyltransferase"/>
    <property type="match status" value="1"/>
</dbReference>
<dbReference type="Pfam" id="PF00501">
    <property type="entry name" value="AMP-binding"/>
    <property type="match status" value="1"/>
</dbReference>
<dbReference type="Pfam" id="PF13193">
    <property type="entry name" value="AMP-binding_C"/>
    <property type="match status" value="1"/>
</dbReference>
<dbReference type="SMART" id="SM00563">
    <property type="entry name" value="PlsC"/>
    <property type="match status" value="1"/>
</dbReference>
<dbReference type="SUPFAM" id="SSF56801">
    <property type="entry name" value="Acetyl-CoA synthetase-like"/>
    <property type="match status" value="1"/>
</dbReference>
<dbReference type="SUPFAM" id="SSF69593">
    <property type="entry name" value="Glycerol-3-phosphate (1)-acyltransferase"/>
    <property type="match status" value="1"/>
</dbReference>
<dbReference type="PROSITE" id="PS00455">
    <property type="entry name" value="AMP_BINDING"/>
    <property type="match status" value="1"/>
</dbReference>